<comment type="function">
    <text>Magnesium transporter that may mediate the influx of magnesium.</text>
</comment>
<comment type="subcellular location">
    <subcellularLocation>
        <location evidence="1">Membrane</location>
        <topology evidence="1">Multi-pass membrane protein</topology>
    </subcellularLocation>
</comment>
<comment type="tissue specificity">
    <text evidence="4 5 6">Expressed in the whole plant except stems.</text>
</comment>
<comment type="miscellaneous">
    <text>Has the ability to complement a mutant in yeast lacking magnesium transport capability.</text>
</comment>
<comment type="similarity">
    <text evidence="7">Belongs to the CorA metal ion transporter (MIT) (TC 1.A.35.5) family.</text>
</comment>
<name>MRS21_ARATH</name>
<accession>Q9S9N4</accession>
<gene>
    <name type="primary">MRS2-1</name>
    <name type="synonym">MGT2</name>
    <name type="ordered locus">At1g16010</name>
    <name type="ORF">T24D18.11</name>
</gene>
<reference key="1">
    <citation type="journal article" date="2000" name="Plant J.">
        <title>A member of a novel Arabidopsis thaliana gene family of candidate Mg2+ ion transporters complements a yeast mitochondrial group II intron-splicing mutant.</title>
        <authorList>
            <person name="Schock I."/>
            <person name="Gregan J."/>
            <person name="Steinhauser S."/>
            <person name="Schweyen R."/>
            <person name="Brennicke A."/>
            <person name="Knoop V."/>
        </authorList>
    </citation>
    <scope>NUCLEOTIDE SEQUENCE [MRNA]</scope>
    <scope>TISSUE SPECIFICITY</scope>
</reference>
<reference key="2">
    <citation type="journal article" date="2001" name="Plant Cell">
        <title>A novel family of magnesium transport genes in Arabidopsis.</title>
        <authorList>
            <person name="Li L."/>
            <person name="Tutone A.F."/>
            <person name="Drummond R.S."/>
            <person name="Gardner R.C."/>
            <person name="Luan S."/>
        </authorList>
    </citation>
    <scope>NUCLEOTIDE SEQUENCE [MRNA]</scope>
    <scope>GENE FAMILY</scope>
    <scope>TISSUE SPECIFICITY</scope>
    <source>
        <strain>cv. Landsberg erecta</strain>
    </source>
</reference>
<reference key="3">
    <citation type="journal article" date="2000" name="Nature">
        <title>Sequence and analysis of chromosome 1 of the plant Arabidopsis thaliana.</title>
        <authorList>
            <person name="Theologis A."/>
            <person name="Ecker J.R."/>
            <person name="Palm C.J."/>
            <person name="Federspiel N.A."/>
            <person name="Kaul S."/>
            <person name="White O."/>
            <person name="Alonso J."/>
            <person name="Altafi H."/>
            <person name="Araujo R."/>
            <person name="Bowman C.L."/>
            <person name="Brooks S.Y."/>
            <person name="Buehler E."/>
            <person name="Chan A."/>
            <person name="Chao Q."/>
            <person name="Chen H."/>
            <person name="Cheuk R.F."/>
            <person name="Chin C.W."/>
            <person name="Chung M.K."/>
            <person name="Conn L."/>
            <person name="Conway A.B."/>
            <person name="Conway A.R."/>
            <person name="Creasy T.H."/>
            <person name="Dewar K."/>
            <person name="Dunn P."/>
            <person name="Etgu P."/>
            <person name="Feldblyum T.V."/>
            <person name="Feng J.-D."/>
            <person name="Fong B."/>
            <person name="Fujii C.Y."/>
            <person name="Gill J.E."/>
            <person name="Goldsmith A.D."/>
            <person name="Haas B."/>
            <person name="Hansen N.F."/>
            <person name="Hughes B."/>
            <person name="Huizar L."/>
            <person name="Hunter J.L."/>
            <person name="Jenkins J."/>
            <person name="Johnson-Hopson C."/>
            <person name="Khan S."/>
            <person name="Khaykin E."/>
            <person name="Kim C.J."/>
            <person name="Koo H.L."/>
            <person name="Kremenetskaia I."/>
            <person name="Kurtz D.B."/>
            <person name="Kwan A."/>
            <person name="Lam B."/>
            <person name="Langin-Hooper S."/>
            <person name="Lee A."/>
            <person name="Lee J.M."/>
            <person name="Lenz C.A."/>
            <person name="Li J.H."/>
            <person name="Li Y.-P."/>
            <person name="Lin X."/>
            <person name="Liu S.X."/>
            <person name="Liu Z.A."/>
            <person name="Luros J.S."/>
            <person name="Maiti R."/>
            <person name="Marziali A."/>
            <person name="Militscher J."/>
            <person name="Miranda M."/>
            <person name="Nguyen M."/>
            <person name="Nierman W.C."/>
            <person name="Osborne B.I."/>
            <person name="Pai G."/>
            <person name="Peterson J."/>
            <person name="Pham P.K."/>
            <person name="Rizzo M."/>
            <person name="Rooney T."/>
            <person name="Rowley D."/>
            <person name="Sakano H."/>
            <person name="Salzberg S.L."/>
            <person name="Schwartz J.R."/>
            <person name="Shinn P."/>
            <person name="Southwick A.M."/>
            <person name="Sun H."/>
            <person name="Tallon L.J."/>
            <person name="Tambunga G."/>
            <person name="Toriumi M.J."/>
            <person name="Town C.D."/>
            <person name="Utterback T."/>
            <person name="Van Aken S."/>
            <person name="Vaysberg M."/>
            <person name="Vysotskaia V.S."/>
            <person name="Walker M."/>
            <person name="Wu D."/>
            <person name="Yu G."/>
            <person name="Fraser C.M."/>
            <person name="Venter J.C."/>
            <person name="Davis R.W."/>
        </authorList>
    </citation>
    <scope>NUCLEOTIDE SEQUENCE [LARGE SCALE GENOMIC DNA]</scope>
    <source>
        <strain>cv. Columbia</strain>
    </source>
</reference>
<reference key="4">
    <citation type="journal article" date="2017" name="Plant J.">
        <title>Araport11: a complete reannotation of the Arabidopsis thaliana reference genome.</title>
        <authorList>
            <person name="Cheng C.Y."/>
            <person name="Krishnakumar V."/>
            <person name="Chan A.P."/>
            <person name="Thibaud-Nissen F."/>
            <person name="Schobel S."/>
            <person name="Town C.D."/>
        </authorList>
    </citation>
    <scope>GENOME REANNOTATION</scope>
    <source>
        <strain>cv. Columbia</strain>
    </source>
</reference>
<reference key="5">
    <citation type="journal article" date="2003" name="Science">
        <title>Empirical analysis of transcriptional activity in the Arabidopsis genome.</title>
        <authorList>
            <person name="Yamada K."/>
            <person name="Lim J."/>
            <person name="Dale J.M."/>
            <person name="Chen H."/>
            <person name="Shinn P."/>
            <person name="Palm C.J."/>
            <person name="Southwick A.M."/>
            <person name="Wu H.C."/>
            <person name="Kim C.J."/>
            <person name="Nguyen M."/>
            <person name="Pham P.K."/>
            <person name="Cheuk R.F."/>
            <person name="Karlin-Newmann G."/>
            <person name="Liu S.X."/>
            <person name="Lam B."/>
            <person name="Sakano H."/>
            <person name="Wu T."/>
            <person name="Yu G."/>
            <person name="Miranda M."/>
            <person name="Quach H.L."/>
            <person name="Tripp M."/>
            <person name="Chang C.H."/>
            <person name="Lee J.M."/>
            <person name="Toriumi M.J."/>
            <person name="Chan M.M."/>
            <person name="Tang C.C."/>
            <person name="Onodera C.S."/>
            <person name="Deng J.M."/>
            <person name="Akiyama K."/>
            <person name="Ansari Y."/>
            <person name="Arakawa T."/>
            <person name="Banh J."/>
            <person name="Banno F."/>
            <person name="Bowser L."/>
            <person name="Brooks S.Y."/>
            <person name="Carninci P."/>
            <person name="Chao Q."/>
            <person name="Choy N."/>
            <person name="Enju A."/>
            <person name="Goldsmith A.D."/>
            <person name="Gurjal M."/>
            <person name="Hansen N.F."/>
            <person name="Hayashizaki Y."/>
            <person name="Johnson-Hopson C."/>
            <person name="Hsuan V.W."/>
            <person name="Iida K."/>
            <person name="Karnes M."/>
            <person name="Khan S."/>
            <person name="Koesema E."/>
            <person name="Ishida J."/>
            <person name="Jiang P.X."/>
            <person name="Jones T."/>
            <person name="Kawai J."/>
            <person name="Kamiya A."/>
            <person name="Meyers C."/>
            <person name="Nakajima M."/>
            <person name="Narusaka M."/>
            <person name="Seki M."/>
            <person name="Sakurai T."/>
            <person name="Satou M."/>
            <person name="Tamse R."/>
            <person name="Vaysberg M."/>
            <person name="Wallender E.K."/>
            <person name="Wong C."/>
            <person name="Yamamura Y."/>
            <person name="Yuan S."/>
            <person name="Shinozaki K."/>
            <person name="Davis R.W."/>
            <person name="Theologis A."/>
            <person name="Ecker J.R."/>
        </authorList>
    </citation>
    <scope>NUCLEOTIDE SEQUENCE [LARGE SCALE MRNA]</scope>
    <source>
        <strain>cv. Columbia</strain>
    </source>
</reference>
<reference key="6">
    <citation type="journal article" date="2009" name="DNA Res.">
        <title>Analysis of multiple occurrences of alternative splicing events in Arabidopsis thaliana using novel sequenced full-length cDNAs.</title>
        <authorList>
            <person name="Iida K."/>
            <person name="Fukami-Kobayashi K."/>
            <person name="Toyoda A."/>
            <person name="Sakaki Y."/>
            <person name="Kobayashi M."/>
            <person name="Seki M."/>
            <person name="Shinozaki K."/>
        </authorList>
    </citation>
    <scope>NUCLEOTIDE SEQUENCE [LARGE SCALE MRNA]</scope>
    <source>
        <strain>cv. Columbia</strain>
        <tissue>Rosette leaf</tissue>
    </source>
</reference>
<reference key="7">
    <citation type="journal article" date="2009" name="Plant Cell">
        <title>A root-expressed magnesium transporter of the MRS2/MGT gene family in Arabidopsis thaliana allows for growth in low-Mg2+ environments.</title>
        <authorList>
            <person name="Gebert M."/>
            <person name="Meschenmoser K."/>
            <person name="Svidova S."/>
            <person name="Weghuber J."/>
            <person name="Schweyen R."/>
            <person name="Eifler K."/>
            <person name="Lenz H."/>
            <person name="Weyand K."/>
            <person name="Knoop V."/>
        </authorList>
    </citation>
    <scope>GENE FAMILY</scope>
    <scope>NOMENCLATURE</scope>
    <scope>TISSUE SPECIFICITY</scope>
</reference>
<organism>
    <name type="scientific">Arabidopsis thaliana</name>
    <name type="common">Mouse-ear cress</name>
    <dbReference type="NCBI Taxonomy" id="3702"/>
    <lineage>
        <taxon>Eukaryota</taxon>
        <taxon>Viridiplantae</taxon>
        <taxon>Streptophyta</taxon>
        <taxon>Embryophyta</taxon>
        <taxon>Tracheophyta</taxon>
        <taxon>Spermatophyta</taxon>
        <taxon>Magnoliopsida</taxon>
        <taxon>eudicotyledons</taxon>
        <taxon>Gunneridae</taxon>
        <taxon>Pentapetalae</taxon>
        <taxon>rosids</taxon>
        <taxon>malvids</taxon>
        <taxon>Brassicales</taxon>
        <taxon>Brassicaceae</taxon>
        <taxon>Camelineae</taxon>
        <taxon>Arabidopsis</taxon>
    </lineage>
</organism>
<feature type="chain" id="PRO_0000394165" description="Magnesium transporter MRS2-1">
    <location>
        <begin position="1"/>
        <end position="442"/>
    </location>
</feature>
<feature type="transmembrane region" description="Helical" evidence="2">
    <location>
        <begin position="378"/>
        <end position="398"/>
    </location>
</feature>
<feature type="transmembrane region" description="Helical" evidence="2">
    <location>
        <begin position="414"/>
        <end position="434"/>
    </location>
</feature>
<feature type="region of interest" description="Disordered" evidence="3">
    <location>
        <begin position="1"/>
        <end position="30"/>
    </location>
</feature>
<feature type="short sequence motif" description="Required for magnesium transport activity">
    <location>
        <begin position="398"/>
        <end position="400"/>
    </location>
</feature>
<proteinExistence type="evidence at transcript level"/>
<protein>
    <recommendedName>
        <fullName>Magnesium transporter MRS2-1</fullName>
    </recommendedName>
    <alternativeName>
        <fullName>Magnesium Transporter 2</fullName>
        <shortName>AtMGT2</shortName>
    </alternativeName>
</protein>
<dbReference type="EMBL" id="AJ297816">
    <property type="protein sequence ID" value="CAC13981.1"/>
    <property type="molecule type" value="mRNA"/>
</dbReference>
<dbReference type="EMBL" id="AY150286">
    <property type="protein sequence ID" value="AAN73211.1"/>
    <property type="molecule type" value="mRNA"/>
</dbReference>
<dbReference type="EMBL" id="AC010924">
    <property type="protein sequence ID" value="AAF18497.1"/>
    <property type="molecule type" value="Genomic_DNA"/>
</dbReference>
<dbReference type="EMBL" id="CP002684">
    <property type="protein sequence ID" value="AEE29395.1"/>
    <property type="molecule type" value="Genomic_DNA"/>
</dbReference>
<dbReference type="EMBL" id="CP002684">
    <property type="protein sequence ID" value="AEE29396.1"/>
    <property type="molecule type" value="Genomic_DNA"/>
</dbReference>
<dbReference type="EMBL" id="CP002684">
    <property type="protein sequence ID" value="AEE29397.1"/>
    <property type="molecule type" value="Genomic_DNA"/>
</dbReference>
<dbReference type="EMBL" id="AY054657">
    <property type="protein sequence ID" value="AAK96848.1"/>
    <property type="molecule type" value="mRNA"/>
</dbReference>
<dbReference type="EMBL" id="AY081530">
    <property type="protein sequence ID" value="AAM10092.1"/>
    <property type="molecule type" value="mRNA"/>
</dbReference>
<dbReference type="EMBL" id="AK318948">
    <property type="protein sequence ID" value="BAH57063.1"/>
    <property type="molecule type" value="mRNA"/>
</dbReference>
<dbReference type="EMBL" id="AK319031">
    <property type="protein sequence ID" value="BAH57146.1"/>
    <property type="molecule type" value="mRNA"/>
</dbReference>
<dbReference type="PIR" id="G86294">
    <property type="entry name" value="G86294"/>
</dbReference>
<dbReference type="RefSeq" id="NP_001077545.1">
    <property type="nucleotide sequence ID" value="NM_001084076.1"/>
</dbReference>
<dbReference type="RefSeq" id="NP_001185007.1">
    <property type="nucleotide sequence ID" value="NM_001198078.1"/>
</dbReference>
<dbReference type="RefSeq" id="NP_563988.1">
    <property type="nucleotide sequence ID" value="NM_101469.1"/>
</dbReference>
<dbReference type="SMR" id="Q9S9N4"/>
<dbReference type="BioGRID" id="23411">
    <property type="interactions" value="7"/>
</dbReference>
<dbReference type="FunCoup" id="Q9S9N4">
    <property type="interactions" value="1909"/>
</dbReference>
<dbReference type="IntAct" id="Q9S9N4">
    <property type="interactions" value="6"/>
</dbReference>
<dbReference type="STRING" id="3702.Q9S9N4"/>
<dbReference type="iPTMnet" id="Q9S9N4"/>
<dbReference type="PaxDb" id="3702-AT1G16010.2"/>
<dbReference type="ProteomicsDB" id="238908"/>
<dbReference type="EnsemblPlants" id="AT1G16010.1">
    <property type="protein sequence ID" value="AT1G16010.1"/>
    <property type="gene ID" value="AT1G16010"/>
</dbReference>
<dbReference type="EnsemblPlants" id="AT1G16010.2">
    <property type="protein sequence ID" value="AT1G16010.2"/>
    <property type="gene ID" value="AT1G16010"/>
</dbReference>
<dbReference type="EnsemblPlants" id="AT1G16010.3">
    <property type="protein sequence ID" value="AT1G16010.3"/>
    <property type="gene ID" value="AT1G16010"/>
</dbReference>
<dbReference type="GeneID" id="838171"/>
<dbReference type="Gramene" id="AT1G16010.1">
    <property type="protein sequence ID" value="AT1G16010.1"/>
    <property type="gene ID" value="AT1G16010"/>
</dbReference>
<dbReference type="Gramene" id="AT1G16010.2">
    <property type="protein sequence ID" value="AT1G16010.2"/>
    <property type="gene ID" value="AT1G16010"/>
</dbReference>
<dbReference type="Gramene" id="AT1G16010.3">
    <property type="protein sequence ID" value="AT1G16010.3"/>
    <property type="gene ID" value="AT1G16010"/>
</dbReference>
<dbReference type="KEGG" id="ath:AT1G16010"/>
<dbReference type="Araport" id="AT1G16010"/>
<dbReference type="TAIR" id="AT1G16010">
    <property type="gene designation" value="MGT2"/>
</dbReference>
<dbReference type="eggNOG" id="KOG2662">
    <property type="taxonomic scope" value="Eukaryota"/>
</dbReference>
<dbReference type="HOGENOM" id="CLU_034694_1_1_1"/>
<dbReference type="InParanoid" id="Q9S9N4"/>
<dbReference type="OMA" id="GHCSIER"/>
<dbReference type="OrthoDB" id="10251508at2759"/>
<dbReference type="PhylomeDB" id="Q9S9N4"/>
<dbReference type="PRO" id="PR:Q9S9N4"/>
<dbReference type="Proteomes" id="UP000006548">
    <property type="component" value="Chromosome 1"/>
</dbReference>
<dbReference type="ExpressionAtlas" id="Q9S9N4">
    <property type="expression patterns" value="baseline and differential"/>
</dbReference>
<dbReference type="GO" id="GO:0016020">
    <property type="term" value="C:membrane"/>
    <property type="evidence" value="ECO:0007669"/>
    <property type="project" value="UniProtKB-SubCell"/>
</dbReference>
<dbReference type="GO" id="GO:0000325">
    <property type="term" value="C:plant-type vacuole"/>
    <property type="evidence" value="ECO:0007005"/>
    <property type="project" value="TAIR"/>
</dbReference>
<dbReference type="GO" id="GO:0015095">
    <property type="term" value="F:magnesium ion transmembrane transporter activity"/>
    <property type="evidence" value="ECO:0000314"/>
    <property type="project" value="TAIR"/>
</dbReference>
<dbReference type="CDD" id="cd12823">
    <property type="entry name" value="Mrs2_Mfm1p-like"/>
    <property type="match status" value="1"/>
</dbReference>
<dbReference type="FunFam" id="1.20.58.340:FF:000009">
    <property type="entry name" value="Magnesium transporter MRS2-1"/>
    <property type="match status" value="1"/>
</dbReference>
<dbReference type="FunFam" id="2.40.128.330:FF:000001">
    <property type="entry name" value="Magnesium transporter MRS2-1"/>
    <property type="match status" value="1"/>
</dbReference>
<dbReference type="Gene3D" id="2.40.128.330">
    <property type="match status" value="1"/>
</dbReference>
<dbReference type="Gene3D" id="1.20.58.340">
    <property type="entry name" value="Magnesium transport protein CorA, transmembrane region"/>
    <property type="match status" value="2"/>
</dbReference>
<dbReference type="InterPro" id="IPR045863">
    <property type="entry name" value="CorA_TM1_TM2"/>
</dbReference>
<dbReference type="InterPro" id="IPR039204">
    <property type="entry name" value="MRS2-like"/>
</dbReference>
<dbReference type="PANTHER" id="PTHR13890:SF26">
    <property type="entry name" value="MAGNESIUM TRANSPORTER MRS2-1"/>
    <property type="match status" value="1"/>
</dbReference>
<dbReference type="PANTHER" id="PTHR13890">
    <property type="entry name" value="RNA SPLICING PROTEIN MRS2, MITOCHONDRIAL"/>
    <property type="match status" value="1"/>
</dbReference>
<dbReference type="Pfam" id="PF22099">
    <property type="entry name" value="MRS2-like"/>
    <property type="match status" value="2"/>
</dbReference>
<dbReference type="SUPFAM" id="SSF144083">
    <property type="entry name" value="Magnesium transport protein CorA, transmembrane region"/>
    <property type="match status" value="1"/>
</dbReference>
<evidence type="ECO:0000250" key="1"/>
<evidence type="ECO:0000255" key="2"/>
<evidence type="ECO:0000256" key="3">
    <source>
        <dbReference type="SAM" id="MobiDB-lite"/>
    </source>
</evidence>
<evidence type="ECO:0000269" key="4">
    <source>
    </source>
</evidence>
<evidence type="ECO:0000269" key="5">
    <source>
    </source>
</evidence>
<evidence type="ECO:0000269" key="6">
    <source>
    </source>
</evidence>
<evidence type="ECO:0000305" key="7"/>
<sequence length="442" mass="50420">MSELKERLLPPRPASAMNLRDASVTRPSASGRPPLLGVDVLGLKKRGQGLRSWIRVDTSGNTQVMEVDKFTMMRRCDLPARDLRLLDPLFVYPSTILGREKAIVVNLEQIRCIITADEVLLLNSLDNYVLRYVVELQQRLKTSSVGEMWQQENSQLSRRRSRSFDNAFENSSPDYLPFEFRALEIALEAACTFLDSQASELEIEAYPLLDELTSKISTLNLERVRRLKSRLVALTRRVQKVRDEIEQLMDDDGDMAEMYLTEKKRRMEGSMYGDQSLLGYRSNDGLSVSAPVSPVSSPPDSRRLDKSLSIARSRHDSARSSEGAENIEELEMLLEAYFVVIDSTLNKLTSLKEYIDDTEDFINIQLDNVRNQLIQFELLLTTATFVVAIFGVVAGIFGMNFEIDFFNQPGAFRWVLIITGVCGFVIFSAFVWFFKYRRLMPL</sequence>
<keyword id="KW-0406">Ion transport</keyword>
<keyword id="KW-0460">Magnesium</keyword>
<keyword id="KW-0472">Membrane</keyword>
<keyword id="KW-1185">Reference proteome</keyword>
<keyword id="KW-0812">Transmembrane</keyword>
<keyword id="KW-1133">Transmembrane helix</keyword>
<keyword id="KW-0813">Transport</keyword>